<keyword id="KW-0238">DNA-binding</keyword>
<keyword id="KW-0479">Metal-binding</keyword>
<keyword id="KW-0539">Nucleus</keyword>
<keyword id="KW-1185">Reference proteome</keyword>
<keyword id="KW-0677">Repeat</keyword>
<keyword id="KW-0678">Repressor</keyword>
<keyword id="KW-0804">Transcription</keyword>
<keyword id="KW-0805">Transcription regulation</keyword>
<keyword id="KW-0862">Zinc</keyword>
<keyword id="KW-0863">Zinc-finger</keyword>
<accession>Q6NRM8</accession>
<dbReference type="EMBL" id="BC070718">
    <property type="protein sequence ID" value="AAH70718.1"/>
    <property type="molecule type" value="mRNA"/>
</dbReference>
<dbReference type="RefSeq" id="NP_001084919.1">
    <property type="nucleotide sequence ID" value="NM_001091450.1"/>
</dbReference>
<dbReference type="RefSeq" id="XP_018119831.1">
    <property type="nucleotide sequence ID" value="XM_018264342.1"/>
</dbReference>
<dbReference type="RefSeq" id="XP_018119832.1">
    <property type="nucleotide sequence ID" value="XM_018264343.1"/>
</dbReference>
<dbReference type="SMR" id="Q6NRM8"/>
<dbReference type="DNASU" id="431971"/>
<dbReference type="GeneID" id="431971"/>
<dbReference type="KEGG" id="xla:431971"/>
<dbReference type="AGR" id="Xenbase:XB-GENE-17336772"/>
<dbReference type="CTD" id="431971"/>
<dbReference type="OMA" id="AGYEDIM"/>
<dbReference type="OrthoDB" id="4748970at2759"/>
<dbReference type="Proteomes" id="UP000186698">
    <property type="component" value="Chromosome 5S"/>
</dbReference>
<dbReference type="Bgee" id="431971">
    <property type="expression patterns" value="Expressed in brain and 19 other cell types or tissues"/>
</dbReference>
<dbReference type="GO" id="GO:0005634">
    <property type="term" value="C:nucleus"/>
    <property type="evidence" value="ECO:0000318"/>
    <property type="project" value="GO_Central"/>
</dbReference>
<dbReference type="GO" id="GO:0003677">
    <property type="term" value="F:DNA binding"/>
    <property type="evidence" value="ECO:0007669"/>
    <property type="project" value="UniProtKB-KW"/>
</dbReference>
<dbReference type="GO" id="GO:0000981">
    <property type="term" value="F:DNA-binding transcription factor activity, RNA polymerase II-specific"/>
    <property type="evidence" value="ECO:0000318"/>
    <property type="project" value="GO_Central"/>
</dbReference>
<dbReference type="GO" id="GO:0008270">
    <property type="term" value="F:zinc ion binding"/>
    <property type="evidence" value="ECO:0007669"/>
    <property type="project" value="UniProtKB-KW"/>
</dbReference>
<dbReference type="GO" id="GO:0006357">
    <property type="term" value="P:regulation of transcription by RNA polymerase II"/>
    <property type="evidence" value="ECO:0000318"/>
    <property type="project" value="GO_Central"/>
</dbReference>
<dbReference type="FunFam" id="3.30.160.60:FF:000646">
    <property type="entry name" value="Myeloid zinc finger 1"/>
    <property type="match status" value="1"/>
</dbReference>
<dbReference type="FunFam" id="3.30.160.60:FF:000114">
    <property type="entry name" value="Zinc finger and BTB domain-containing protein 18"/>
    <property type="match status" value="1"/>
</dbReference>
<dbReference type="FunFam" id="3.30.710.10:FF:000021">
    <property type="entry name" value="Zinc finger and BTB domain-containing protein 18"/>
    <property type="match status" value="1"/>
</dbReference>
<dbReference type="FunFam" id="3.30.160.60:FF:000892">
    <property type="entry name" value="zinc finger and BTB domain-containing protein 3"/>
    <property type="match status" value="1"/>
</dbReference>
<dbReference type="Gene3D" id="3.30.160.60">
    <property type="entry name" value="Classic Zinc Finger"/>
    <property type="match status" value="3"/>
</dbReference>
<dbReference type="Gene3D" id="3.30.710.10">
    <property type="entry name" value="Potassium Channel Kv1.1, Chain A"/>
    <property type="match status" value="1"/>
</dbReference>
<dbReference type="InterPro" id="IPR000210">
    <property type="entry name" value="BTB/POZ_dom"/>
</dbReference>
<dbReference type="InterPro" id="IPR011333">
    <property type="entry name" value="SKP1/BTB/POZ_sf"/>
</dbReference>
<dbReference type="InterPro" id="IPR036236">
    <property type="entry name" value="Znf_C2H2_sf"/>
</dbReference>
<dbReference type="InterPro" id="IPR013087">
    <property type="entry name" value="Znf_C2H2_type"/>
</dbReference>
<dbReference type="PANTHER" id="PTHR24394:SF18">
    <property type="entry name" value="ZINC FINGER AND BTB DOMAIN-CONTAINING PROTEIN 18"/>
    <property type="match status" value="1"/>
</dbReference>
<dbReference type="PANTHER" id="PTHR24394">
    <property type="entry name" value="ZINC FINGER PROTEIN"/>
    <property type="match status" value="1"/>
</dbReference>
<dbReference type="Pfam" id="PF00651">
    <property type="entry name" value="BTB"/>
    <property type="match status" value="1"/>
</dbReference>
<dbReference type="Pfam" id="PF00096">
    <property type="entry name" value="zf-C2H2"/>
    <property type="match status" value="3"/>
</dbReference>
<dbReference type="Pfam" id="PF13894">
    <property type="entry name" value="zf-C2H2_4"/>
    <property type="match status" value="1"/>
</dbReference>
<dbReference type="SMART" id="SM00225">
    <property type="entry name" value="BTB"/>
    <property type="match status" value="1"/>
</dbReference>
<dbReference type="SMART" id="SM00355">
    <property type="entry name" value="ZnF_C2H2"/>
    <property type="match status" value="4"/>
</dbReference>
<dbReference type="SUPFAM" id="SSF57667">
    <property type="entry name" value="beta-beta-alpha zinc fingers"/>
    <property type="match status" value="3"/>
</dbReference>
<dbReference type="SUPFAM" id="SSF54695">
    <property type="entry name" value="POZ domain"/>
    <property type="match status" value="1"/>
</dbReference>
<dbReference type="PROSITE" id="PS50097">
    <property type="entry name" value="BTB"/>
    <property type="match status" value="1"/>
</dbReference>
<dbReference type="PROSITE" id="PS00028">
    <property type="entry name" value="ZINC_FINGER_C2H2_1"/>
    <property type="match status" value="4"/>
</dbReference>
<dbReference type="PROSITE" id="PS50157">
    <property type="entry name" value="ZINC_FINGER_C2H2_2"/>
    <property type="match status" value="4"/>
</dbReference>
<evidence type="ECO:0000250" key="1"/>
<evidence type="ECO:0000255" key="2">
    <source>
        <dbReference type="PROSITE-ProRule" id="PRU00037"/>
    </source>
</evidence>
<evidence type="ECO:0000255" key="3">
    <source>
        <dbReference type="PROSITE-ProRule" id="PRU00042"/>
    </source>
</evidence>
<evidence type="ECO:0000256" key="4">
    <source>
        <dbReference type="SAM" id="MobiDB-lite"/>
    </source>
</evidence>
<evidence type="ECO:0000305" key="5"/>
<feature type="chain" id="PRO_0000391928" description="Zinc finger and BTB domain-containing protein 18.3">
    <location>
        <begin position="1"/>
        <end position="519"/>
    </location>
</feature>
<feature type="domain" description="BTB" evidence="2">
    <location>
        <begin position="24"/>
        <end position="91"/>
    </location>
</feature>
<feature type="zinc finger region" description="C2H2-type 1" evidence="3">
    <location>
        <begin position="367"/>
        <end position="389"/>
    </location>
</feature>
<feature type="zinc finger region" description="C2H2-type 2" evidence="3">
    <location>
        <begin position="407"/>
        <end position="429"/>
    </location>
</feature>
<feature type="zinc finger region" description="C2H2-type 3" evidence="3">
    <location>
        <begin position="435"/>
        <end position="457"/>
    </location>
</feature>
<feature type="zinc finger region" description="C2H2-type 4" evidence="3">
    <location>
        <begin position="463"/>
        <end position="486"/>
    </location>
</feature>
<feature type="region of interest" description="Disordered" evidence="4">
    <location>
        <begin position="189"/>
        <end position="227"/>
    </location>
</feature>
<feature type="compositionally biased region" description="Polar residues" evidence="4">
    <location>
        <begin position="201"/>
        <end position="227"/>
    </location>
</feature>
<name>ZB183_XENLA</name>
<protein>
    <recommendedName>
        <fullName>Zinc finger and BTB domain-containing protein 18.3</fullName>
    </recommendedName>
    <alternativeName>
        <fullName>Zinc finger protein 238.3</fullName>
    </alternativeName>
</protein>
<comment type="function">
    <text evidence="1">Transcriptional repressor that plays a role in various developmental processes. Specifically binds the consensus DNA sequence 5'-[AC]ACATCTG[GT][AC]-3' which contains the E box core, and acts by recruiting chromatin remodeling multiprotein complexes (By similarity).</text>
</comment>
<comment type="subcellular location">
    <subcellularLocation>
        <location evidence="1">Nucleus</location>
    </subcellularLocation>
</comment>
<comment type="similarity">
    <text evidence="5">Belongs to the krueppel C2H2-type zinc-finger protein family. ZBTB18 subfamily.</text>
</comment>
<reference key="1">
    <citation type="submission" date="2004-05" db="EMBL/GenBank/DDBJ databases">
        <authorList>
            <consortium name="NIH - Xenopus Gene Collection (XGC) project"/>
        </authorList>
    </citation>
    <scope>NUCLEOTIDE SEQUENCE [LARGE SCALE MRNA]</scope>
    <source>
        <tissue>Oocyte</tissue>
    </source>
</reference>
<sequence length="519" mass="58490">MEFPEHSRHLLQCLSEQRHQGFLCDCTVLVGDAHFRAHRAVLASCSMYFHLFYKDQLDKKNIVYLNSDIVTAPAFALLLEFMYEGKLQFKDLPIEDVLAAASYLHMYDIVKVCKKKLKEKATTEADSTKKEEDTLSCSDKIECLSDGSSHMAGDLPSDEDDVEEEKINSKTDLATESGNMWIRLSSDSASIPQTGGEVDTHTTAAGKTADSPCSSTGSLSHRSATSMGDSTDVDCVLDLSVKSSLSGTETLNNSYLSSQEILRNSLVQVKIEREASCEDNDIHTSEYDIERNTVKENVSSNIRAPYEPVHLAPIREDSVLRELDHDDKAINDDMITPENERVQMEANIDNSLLPYVQNILSPAGQIFMCPLCNKVFPSPHILQIHLSTHFREQEGIRSKPTNDVHVPTCSLCGKTFSCMYTLKRHERTHSGEKPFTCTQCGKSFQYSHNLSRHAVVHTREKPHACKWCERRFTQSGDLYRHIRKFHCELVNSLSVKSETLGLPAVRDWTLEDSSQELWK</sequence>
<proteinExistence type="evidence at transcript level"/>
<organism>
    <name type="scientific">Xenopus laevis</name>
    <name type="common">African clawed frog</name>
    <dbReference type="NCBI Taxonomy" id="8355"/>
    <lineage>
        <taxon>Eukaryota</taxon>
        <taxon>Metazoa</taxon>
        <taxon>Chordata</taxon>
        <taxon>Craniata</taxon>
        <taxon>Vertebrata</taxon>
        <taxon>Euteleostomi</taxon>
        <taxon>Amphibia</taxon>
        <taxon>Batrachia</taxon>
        <taxon>Anura</taxon>
        <taxon>Pipoidea</taxon>
        <taxon>Pipidae</taxon>
        <taxon>Xenopodinae</taxon>
        <taxon>Xenopus</taxon>
        <taxon>Xenopus</taxon>
    </lineage>
</organism>
<gene>
    <name type="primary">zbtb18.3</name>
    <name type="synonym">znf238.3</name>
</gene>